<protein>
    <recommendedName>
        <fullName evidence="1">Large ribosomal subunit protein bL32</fullName>
    </recommendedName>
    <alternativeName>
        <fullName evidence="3">50S ribosomal protein L32</fullName>
    </alternativeName>
</protein>
<keyword id="KW-0687">Ribonucleoprotein</keyword>
<keyword id="KW-0689">Ribosomal protein</keyword>
<accession>Q0S4Y6</accession>
<sequence>MAVPKRRMSRSNTRSRRSQWKAQAPDLVGVTVGGATHRVPRRLVKAVKLGLVDPAGK</sequence>
<organism>
    <name type="scientific">Rhodococcus jostii (strain RHA1)</name>
    <dbReference type="NCBI Taxonomy" id="101510"/>
    <lineage>
        <taxon>Bacteria</taxon>
        <taxon>Bacillati</taxon>
        <taxon>Actinomycetota</taxon>
        <taxon>Actinomycetes</taxon>
        <taxon>Mycobacteriales</taxon>
        <taxon>Nocardiaceae</taxon>
        <taxon>Rhodococcus</taxon>
    </lineage>
</organism>
<feature type="chain" id="PRO_0000296544" description="Large ribosomal subunit protein bL32">
    <location>
        <begin position="1"/>
        <end position="57"/>
    </location>
</feature>
<feature type="region of interest" description="Disordered" evidence="2">
    <location>
        <begin position="1"/>
        <end position="22"/>
    </location>
</feature>
<feature type="compositionally biased region" description="Basic residues" evidence="2">
    <location>
        <begin position="1"/>
        <end position="19"/>
    </location>
</feature>
<proteinExistence type="inferred from homology"/>
<gene>
    <name evidence="1" type="primary">rpmF</name>
    <name type="ordered locus">RHA1_ro05620</name>
</gene>
<name>RL32_RHOJR</name>
<dbReference type="EMBL" id="CP000431">
    <property type="protein sequence ID" value="ABG97400.1"/>
    <property type="molecule type" value="Genomic_DNA"/>
</dbReference>
<dbReference type="RefSeq" id="WP_009478880.1">
    <property type="nucleotide sequence ID" value="NC_008268.1"/>
</dbReference>
<dbReference type="SMR" id="Q0S4Y6"/>
<dbReference type="KEGG" id="rha:RHA1_ro05620"/>
<dbReference type="eggNOG" id="ENOG5033AVR">
    <property type="taxonomic scope" value="Bacteria"/>
</dbReference>
<dbReference type="HOGENOM" id="CLU_203263_0_0_11"/>
<dbReference type="OrthoDB" id="9807363at2"/>
<dbReference type="Proteomes" id="UP000008710">
    <property type="component" value="Chromosome"/>
</dbReference>
<dbReference type="GO" id="GO:0015934">
    <property type="term" value="C:large ribosomal subunit"/>
    <property type="evidence" value="ECO:0007669"/>
    <property type="project" value="InterPro"/>
</dbReference>
<dbReference type="GO" id="GO:0003735">
    <property type="term" value="F:structural constituent of ribosome"/>
    <property type="evidence" value="ECO:0007669"/>
    <property type="project" value="InterPro"/>
</dbReference>
<dbReference type="GO" id="GO:0006412">
    <property type="term" value="P:translation"/>
    <property type="evidence" value="ECO:0007669"/>
    <property type="project" value="UniProtKB-UniRule"/>
</dbReference>
<dbReference type="HAMAP" id="MF_00340">
    <property type="entry name" value="Ribosomal_bL32"/>
    <property type="match status" value="1"/>
</dbReference>
<dbReference type="InterPro" id="IPR002677">
    <property type="entry name" value="Ribosomal_bL32"/>
</dbReference>
<dbReference type="InterPro" id="IPR011332">
    <property type="entry name" value="Ribosomal_zn-bd"/>
</dbReference>
<dbReference type="NCBIfam" id="TIGR01031">
    <property type="entry name" value="rpmF_bact"/>
    <property type="match status" value="1"/>
</dbReference>
<dbReference type="Pfam" id="PF01783">
    <property type="entry name" value="Ribosomal_L32p"/>
    <property type="match status" value="1"/>
</dbReference>
<dbReference type="SUPFAM" id="SSF57829">
    <property type="entry name" value="Zn-binding ribosomal proteins"/>
    <property type="match status" value="1"/>
</dbReference>
<comment type="similarity">
    <text evidence="1">Belongs to the bacterial ribosomal protein bL32 family.</text>
</comment>
<evidence type="ECO:0000255" key="1">
    <source>
        <dbReference type="HAMAP-Rule" id="MF_00340"/>
    </source>
</evidence>
<evidence type="ECO:0000256" key="2">
    <source>
        <dbReference type="SAM" id="MobiDB-lite"/>
    </source>
</evidence>
<evidence type="ECO:0000305" key="3"/>
<reference key="1">
    <citation type="journal article" date="2006" name="Proc. Natl. Acad. Sci. U.S.A.">
        <title>The complete genome of Rhodococcus sp. RHA1 provides insights into a catabolic powerhouse.</title>
        <authorList>
            <person name="McLeod M.P."/>
            <person name="Warren R.L."/>
            <person name="Hsiao W.W.L."/>
            <person name="Araki N."/>
            <person name="Myhre M."/>
            <person name="Fernandes C."/>
            <person name="Miyazawa D."/>
            <person name="Wong W."/>
            <person name="Lillquist A.L."/>
            <person name="Wang D."/>
            <person name="Dosanjh M."/>
            <person name="Hara H."/>
            <person name="Petrescu A."/>
            <person name="Morin R.D."/>
            <person name="Yang G."/>
            <person name="Stott J.M."/>
            <person name="Schein J.E."/>
            <person name="Shin H."/>
            <person name="Smailus D."/>
            <person name="Siddiqui A.S."/>
            <person name="Marra M.A."/>
            <person name="Jones S.J.M."/>
            <person name="Holt R."/>
            <person name="Brinkman F.S.L."/>
            <person name="Miyauchi K."/>
            <person name="Fukuda M."/>
            <person name="Davies J.E."/>
            <person name="Mohn W.W."/>
            <person name="Eltis L.D."/>
        </authorList>
    </citation>
    <scope>NUCLEOTIDE SEQUENCE [LARGE SCALE GENOMIC DNA]</scope>
    <source>
        <strain>RHA1</strain>
    </source>
</reference>